<name>PYRH_MYCGA</name>
<sequence>MQKPNIIIKISGASLQDKNSNDCYSYQRINSLADQLKSLAKKYNIGLIVGGGNIFRGKLAKDFGVEINKADYIGMLATVINSTLLESKLQSLGLKTKVLSALEVKGLTNEINPKSLAEVFSDCQIAFFSGGTGNSHFTTDTATVLRAIQINAQLVLIGKDGVDGVYTDDPKKNKKAKFIEQITYQQALNDQLRVMDLTAFSLAKDHNLKLLIFNIEAEQSIIKTIENKNKHTKITN</sequence>
<keyword id="KW-0067">ATP-binding</keyword>
<keyword id="KW-0963">Cytoplasm</keyword>
<keyword id="KW-0418">Kinase</keyword>
<keyword id="KW-0547">Nucleotide-binding</keyword>
<keyword id="KW-0665">Pyrimidine biosynthesis</keyword>
<keyword id="KW-1185">Reference proteome</keyword>
<keyword id="KW-0808">Transferase</keyword>
<gene>
    <name evidence="1" type="primary">pyrH</name>
    <name type="ordered locus">MYCGA0890</name>
    <name type="ORF">MGA_0783</name>
</gene>
<protein>
    <recommendedName>
        <fullName evidence="1">Uridylate kinase</fullName>
        <shortName evidence="1">UK</shortName>
        <ecNumber evidence="1">2.7.4.22</ecNumber>
    </recommendedName>
    <alternativeName>
        <fullName evidence="1">Uridine monophosphate kinase</fullName>
        <shortName evidence="1">UMP kinase</shortName>
        <shortName evidence="1">UMPK</shortName>
    </alternativeName>
</protein>
<accession>Q7NC20</accession>
<organism>
    <name type="scientific">Mycoplasmoides gallisepticum (strain R(low / passage 15 / clone 2))</name>
    <name type="common">Mycoplasma gallisepticum</name>
    <dbReference type="NCBI Taxonomy" id="710127"/>
    <lineage>
        <taxon>Bacteria</taxon>
        <taxon>Bacillati</taxon>
        <taxon>Mycoplasmatota</taxon>
        <taxon>Mycoplasmoidales</taxon>
        <taxon>Mycoplasmoidaceae</taxon>
        <taxon>Mycoplasmoides</taxon>
    </lineage>
</organism>
<proteinExistence type="inferred from homology"/>
<feature type="chain" id="PRO_0000323893" description="Uridylate kinase">
    <location>
        <begin position="1"/>
        <end position="236"/>
    </location>
</feature>
<feature type="binding site" evidence="1">
    <location>
        <begin position="9"/>
        <end position="12"/>
    </location>
    <ligand>
        <name>ATP</name>
        <dbReference type="ChEBI" id="CHEBI:30616"/>
    </ligand>
</feature>
<feature type="binding site" evidence="1">
    <location>
        <position position="51"/>
    </location>
    <ligand>
        <name>UMP</name>
        <dbReference type="ChEBI" id="CHEBI:57865"/>
    </ligand>
</feature>
<feature type="binding site" evidence="1">
    <location>
        <position position="52"/>
    </location>
    <ligand>
        <name>ATP</name>
        <dbReference type="ChEBI" id="CHEBI:30616"/>
    </ligand>
</feature>
<feature type="binding site" evidence="1">
    <location>
        <position position="56"/>
    </location>
    <ligand>
        <name>ATP</name>
        <dbReference type="ChEBI" id="CHEBI:30616"/>
    </ligand>
</feature>
<feature type="binding site" evidence="1">
    <location>
        <position position="71"/>
    </location>
    <ligand>
        <name>UMP</name>
        <dbReference type="ChEBI" id="CHEBI:57865"/>
    </ligand>
</feature>
<feature type="binding site" evidence="1">
    <location>
        <begin position="132"/>
        <end position="139"/>
    </location>
    <ligand>
        <name>UMP</name>
        <dbReference type="ChEBI" id="CHEBI:57865"/>
    </ligand>
</feature>
<feature type="binding site" evidence="1">
    <location>
        <position position="166"/>
    </location>
    <ligand>
        <name>ATP</name>
        <dbReference type="ChEBI" id="CHEBI:30616"/>
    </ligand>
</feature>
<feature type="binding site" evidence="1">
    <location>
        <position position="169"/>
    </location>
    <ligand>
        <name>ATP</name>
        <dbReference type="ChEBI" id="CHEBI:30616"/>
    </ligand>
</feature>
<evidence type="ECO:0000255" key="1">
    <source>
        <dbReference type="HAMAP-Rule" id="MF_01220"/>
    </source>
</evidence>
<comment type="function">
    <text evidence="1">Catalyzes the reversible phosphorylation of UMP to UDP.</text>
</comment>
<comment type="catalytic activity">
    <reaction evidence="1">
        <text>UMP + ATP = UDP + ADP</text>
        <dbReference type="Rhea" id="RHEA:24400"/>
        <dbReference type="ChEBI" id="CHEBI:30616"/>
        <dbReference type="ChEBI" id="CHEBI:57865"/>
        <dbReference type="ChEBI" id="CHEBI:58223"/>
        <dbReference type="ChEBI" id="CHEBI:456216"/>
        <dbReference type="EC" id="2.7.4.22"/>
    </reaction>
</comment>
<comment type="activity regulation">
    <text evidence="1">Inhibited by UTP.</text>
</comment>
<comment type="pathway">
    <text evidence="1">Pyrimidine metabolism; CTP biosynthesis via de novo pathway; UDP from UMP (UMPK route): step 1/1.</text>
</comment>
<comment type="subunit">
    <text evidence="1">Homohexamer.</text>
</comment>
<comment type="subcellular location">
    <subcellularLocation>
        <location evidence="1">Cytoplasm</location>
    </subcellularLocation>
</comment>
<comment type="similarity">
    <text evidence="1">Belongs to the UMP kinase family.</text>
</comment>
<dbReference type="EC" id="2.7.4.22" evidence="1"/>
<dbReference type="EMBL" id="AE015450">
    <property type="protein sequence ID" value="AAP56439.2"/>
    <property type="molecule type" value="Genomic_DNA"/>
</dbReference>
<dbReference type="RefSeq" id="WP_011113318.1">
    <property type="nucleotide sequence ID" value="NC_004829.2"/>
</dbReference>
<dbReference type="SMR" id="Q7NC20"/>
<dbReference type="GeneID" id="93509909"/>
<dbReference type="KEGG" id="mga:MGA_0783"/>
<dbReference type="PATRIC" id="fig|233150.7.peg.93"/>
<dbReference type="HOGENOM" id="CLU_033861_0_1_14"/>
<dbReference type="OrthoDB" id="9807458at2"/>
<dbReference type="UniPathway" id="UPA00159">
    <property type="reaction ID" value="UER00275"/>
</dbReference>
<dbReference type="Proteomes" id="UP000001418">
    <property type="component" value="Chromosome"/>
</dbReference>
<dbReference type="GO" id="GO:0005737">
    <property type="term" value="C:cytoplasm"/>
    <property type="evidence" value="ECO:0007669"/>
    <property type="project" value="UniProtKB-SubCell"/>
</dbReference>
<dbReference type="GO" id="GO:0005524">
    <property type="term" value="F:ATP binding"/>
    <property type="evidence" value="ECO:0007669"/>
    <property type="project" value="UniProtKB-KW"/>
</dbReference>
<dbReference type="GO" id="GO:0033862">
    <property type="term" value="F:UMP kinase activity"/>
    <property type="evidence" value="ECO:0007669"/>
    <property type="project" value="UniProtKB-EC"/>
</dbReference>
<dbReference type="GO" id="GO:0044210">
    <property type="term" value="P:'de novo' CTP biosynthetic process"/>
    <property type="evidence" value="ECO:0007669"/>
    <property type="project" value="UniProtKB-UniRule"/>
</dbReference>
<dbReference type="GO" id="GO:0006225">
    <property type="term" value="P:UDP biosynthetic process"/>
    <property type="evidence" value="ECO:0007669"/>
    <property type="project" value="TreeGrafter"/>
</dbReference>
<dbReference type="CDD" id="cd04254">
    <property type="entry name" value="AAK_UMPK-PyrH-Ec"/>
    <property type="match status" value="1"/>
</dbReference>
<dbReference type="Gene3D" id="3.40.1160.10">
    <property type="entry name" value="Acetylglutamate kinase-like"/>
    <property type="match status" value="1"/>
</dbReference>
<dbReference type="HAMAP" id="MF_01220_B">
    <property type="entry name" value="PyrH_B"/>
    <property type="match status" value="1"/>
</dbReference>
<dbReference type="InterPro" id="IPR036393">
    <property type="entry name" value="AceGlu_kinase-like_sf"/>
</dbReference>
<dbReference type="InterPro" id="IPR001048">
    <property type="entry name" value="Asp/Glu/Uridylate_kinase"/>
</dbReference>
<dbReference type="InterPro" id="IPR011817">
    <property type="entry name" value="Uridylate_kinase"/>
</dbReference>
<dbReference type="InterPro" id="IPR015963">
    <property type="entry name" value="Uridylate_kinase_bac"/>
</dbReference>
<dbReference type="NCBIfam" id="TIGR02075">
    <property type="entry name" value="pyrH_bact"/>
    <property type="match status" value="1"/>
</dbReference>
<dbReference type="PANTHER" id="PTHR42833">
    <property type="entry name" value="URIDYLATE KINASE"/>
    <property type="match status" value="1"/>
</dbReference>
<dbReference type="PANTHER" id="PTHR42833:SF4">
    <property type="entry name" value="URIDYLATE KINASE PUMPKIN, CHLOROPLASTIC"/>
    <property type="match status" value="1"/>
</dbReference>
<dbReference type="Pfam" id="PF00696">
    <property type="entry name" value="AA_kinase"/>
    <property type="match status" value="1"/>
</dbReference>
<dbReference type="PIRSF" id="PIRSF005650">
    <property type="entry name" value="Uridylate_kin"/>
    <property type="match status" value="1"/>
</dbReference>
<dbReference type="SUPFAM" id="SSF53633">
    <property type="entry name" value="Carbamate kinase-like"/>
    <property type="match status" value="1"/>
</dbReference>
<reference key="1">
    <citation type="journal article" date="2003" name="Microbiology">
        <title>The complete genome sequence of the avian pathogen Mycoplasma gallisepticum strain R(low).</title>
        <authorList>
            <person name="Papazisi L."/>
            <person name="Gorton T.S."/>
            <person name="Kutish G."/>
            <person name="Markham P.F."/>
            <person name="Browning G.F."/>
            <person name="Nguyen D.K."/>
            <person name="Swartzell S."/>
            <person name="Madan A."/>
            <person name="Mahairas G."/>
            <person name="Geary S.J."/>
        </authorList>
    </citation>
    <scope>NUCLEOTIDE SEQUENCE [LARGE SCALE GENOMIC DNA]</scope>
    <source>
        <strain>R(low / passage 15 / clone 2)</strain>
    </source>
</reference>